<gene>
    <name evidence="1" type="primary">dtdA</name>
    <name type="ordered locus">NP_0808A</name>
</gene>
<proteinExistence type="inferred from homology"/>
<feature type="chain" id="PRO_0000345225" description="D-aminoacyl-tRNA deacylase">
    <location>
        <begin position="1"/>
        <end position="441"/>
    </location>
</feature>
<name>DTDA_NATPD</name>
<protein>
    <recommendedName>
        <fullName evidence="1">D-aminoacyl-tRNA deacylase</fullName>
        <ecNumber evidence="1">3.1.1.96</ecNumber>
    </recommendedName>
    <alternativeName>
        <fullName>D-tyrosyl-tRNA(Tyr) deacylase</fullName>
    </alternativeName>
</protein>
<organism>
    <name type="scientific">Natronomonas pharaonis (strain ATCC 35678 / DSM 2160 / CIP 103997 / JCM 8858 / NBRC 14720 / NCIMB 2260 / Gabara)</name>
    <name type="common">Halobacterium pharaonis</name>
    <dbReference type="NCBI Taxonomy" id="348780"/>
    <lineage>
        <taxon>Archaea</taxon>
        <taxon>Methanobacteriati</taxon>
        <taxon>Methanobacteriota</taxon>
        <taxon>Stenosarchaea group</taxon>
        <taxon>Halobacteria</taxon>
        <taxon>Halobacteriales</taxon>
        <taxon>Haloarculaceae</taxon>
        <taxon>Natronomonas</taxon>
    </lineage>
</organism>
<keyword id="KW-0378">Hydrolase</keyword>
<keyword id="KW-0479">Metal-binding</keyword>
<keyword id="KW-1185">Reference proteome</keyword>
<keyword id="KW-0862">Zinc</keyword>
<evidence type="ECO:0000255" key="1">
    <source>
        <dbReference type="HAMAP-Rule" id="MF_00562"/>
    </source>
</evidence>
<accession>Q3ITN8</accession>
<dbReference type="EC" id="3.1.1.96" evidence="1"/>
<dbReference type="EMBL" id="CR936257">
    <property type="protein sequence ID" value="CAI48495.1"/>
    <property type="molecule type" value="Genomic_DNA"/>
</dbReference>
<dbReference type="RefSeq" id="WP_011322131.1">
    <property type="nucleotide sequence ID" value="NC_007426.1"/>
</dbReference>
<dbReference type="SMR" id="Q3ITN8"/>
<dbReference type="STRING" id="348780.NP_0808A"/>
<dbReference type="EnsemblBacteria" id="CAI48495">
    <property type="protein sequence ID" value="CAI48495"/>
    <property type="gene ID" value="NP_0808A"/>
</dbReference>
<dbReference type="GeneID" id="3700968"/>
<dbReference type="KEGG" id="nph:NP_0808A"/>
<dbReference type="eggNOG" id="arCOG01616">
    <property type="taxonomic scope" value="Archaea"/>
</dbReference>
<dbReference type="HOGENOM" id="CLU_610619_0_0_2"/>
<dbReference type="OrthoDB" id="9863at2157"/>
<dbReference type="Proteomes" id="UP000002698">
    <property type="component" value="Chromosome"/>
</dbReference>
<dbReference type="GO" id="GO:0051499">
    <property type="term" value="F:D-aminoacyl-tRNA deacylase activity"/>
    <property type="evidence" value="ECO:0007669"/>
    <property type="project" value="UniProtKB-UniRule"/>
</dbReference>
<dbReference type="GO" id="GO:0008270">
    <property type="term" value="F:zinc ion binding"/>
    <property type="evidence" value="ECO:0007669"/>
    <property type="project" value="UniProtKB-UniRule"/>
</dbReference>
<dbReference type="GO" id="GO:0019478">
    <property type="term" value="P:D-amino acid catabolic process"/>
    <property type="evidence" value="ECO:0007669"/>
    <property type="project" value="UniProtKB-UniRule"/>
</dbReference>
<dbReference type="Gene3D" id="3.40.50.10700">
    <property type="entry name" value="AF0625-like"/>
    <property type="match status" value="1"/>
</dbReference>
<dbReference type="Gene3D" id="3.40.630.50">
    <property type="entry name" value="AF0625-like"/>
    <property type="match status" value="1"/>
</dbReference>
<dbReference type="HAMAP" id="MF_00562">
    <property type="entry name" value="Deacylase_DtdA"/>
    <property type="match status" value="1"/>
</dbReference>
<dbReference type="InterPro" id="IPR018033">
    <property type="entry name" value="Deacylase_DtdA_archaea"/>
</dbReference>
<dbReference type="InterPro" id="IPR007508">
    <property type="entry name" value="DtdA"/>
</dbReference>
<dbReference type="NCBIfam" id="NF011435">
    <property type="entry name" value="PRK14866.1-1"/>
    <property type="match status" value="1"/>
</dbReference>
<dbReference type="PANTHER" id="PTHR34667">
    <property type="entry name" value="D-AMINOACYL-TRNA DEACYLASE"/>
    <property type="match status" value="1"/>
</dbReference>
<dbReference type="PANTHER" id="PTHR34667:SF1">
    <property type="entry name" value="D-AMINOACYL-TRNA DEACYLASE"/>
    <property type="match status" value="1"/>
</dbReference>
<dbReference type="Pfam" id="PF04414">
    <property type="entry name" value="tRNA_deacylase"/>
    <property type="match status" value="1"/>
</dbReference>
<dbReference type="SUPFAM" id="SSF142535">
    <property type="entry name" value="AF0625-like"/>
    <property type="match status" value="1"/>
</dbReference>
<comment type="function">
    <text evidence="1">D-aminoacyl-tRNA deacylase with broad substrate specificity. By recycling D-aminoacyl-tRNA to D-amino acids and free tRNA molecules, this enzyme counteracts the toxicity associated with the formation of D-aminoacyl-tRNA entities in vivo.</text>
</comment>
<comment type="catalytic activity">
    <reaction evidence="1">
        <text>a D-aminoacyl-tRNA + H2O = a tRNA + a D-alpha-amino acid + H(+)</text>
        <dbReference type="Rhea" id="RHEA:13953"/>
        <dbReference type="Rhea" id="RHEA-COMP:10123"/>
        <dbReference type="Rhea" id="RHEA-COMP:10124"/>
        <dbReference type="ChEBI" id="CHEBI:15377"/>
        <dbReference type="ChEBI" id="CHEBI:15378"/>
        <dbReference type="ChEBI" id="CHEBI:59871"/>
        <dbReference type="ChEBI" id="CHEBI:78442"/>
        <dbReference type="ChEBI" id="CHEBI:79333"/>
        <dbReference type="EC" id="3.1.1.96"/>
    </reaction>
</comment>
<comment type="catalytic activity">
    <reaction evidence="1">
        <text>glycyl-tRNA(Ala) + H2O = tRNA(Ala) + glycine + H(+)</text>
        <dbReference type="Rhea" id="RHEA:53744"/>
        <dbReference type="Rhea" id="RHEA-COMP:9657"/>
        <dbReference type="Rhea" id="RHEA-COMP:13640"/>
        <dbReference type="ChEBI" id="CHEBI:15377"/>
        <dbReference type="ChEBI" id="CHEBI:15378"/>
        <dbReference type="ChEBI" id="CHEBI:57305"/>
        <dbReference type="ChEBI" id="CHEBI:78442"/>
        <dbReference type="ChEBI" id="CHEBI:78522"/>
        <dbReference type="EC" id="3.1.1.96"/>
    </reaction>
</comment>
<comment type="cofactor">
    <cofactor evidence="1">
        <name>Zn(2+)</name>
        <dbReference type="ChEBI" id="CHEBI:29105"/>
    </cofactor>
    <text evidence="1">Binds 2 Zn(2+) ions per subunit.</text>
</comment>
<comment type="subunit">
    <text evidence="1">Monomer.</text>
</comment>
<comment type="similarity">
    <text evidence="1">Belongs to the DtdA deacylase family.</text>
</comment>
<sequence>MLAIVVSRADEASEHIGRKLRSLADWTEHEDERRADGAGGGTYYRTDRAELRIFDDLHIHLDGAASAFEEPDLLVFASRHSGDTGPLLTAHATGNFGPAEYGGGDGSLARAAPNALSAVRDAFETHAPDDYDVGIECTHHGPSTVGCSSLFVELGSGPDQWQDSEGAAAVARSILSLRGVEPHTERTVVGFGGGHYAPRFDRVLTDTDWGVGHVAADWSLTELGDPRDSRAVIAKAFQASGTEFALVDGDRPELEAVIEDLGFEVLSETFLQETTGVPLSLVGRLEDDCGPIDDGLRLGEPATGYDGEFVTEELPDELLDEANGVDRTAVREAADAVALAYGTADGGSLAVGPVALAAADDYRSLVESLAAVLDTKYDSVEIEASTVIAHREAFDPELARDAGVDEGPAFGKLSSGASVDVDGETVTPDDVHRVRERRFEF</sequence>
<reference key="1">
    <citation type="journal article" date="2005" name="Genome Res.">
        <title>Living with two extremes: conclusions from the genome sequence of Natronomonas pharaonis.</title>
        <authorList>
            <person name="Falb M."/>
            <person name="Pfeiffer F."/>
            <person name="Palm P."/>
            <person name="Rodewald K."/>
            <person name="Hickmann V."/>
            <person name="Tittor J."/>
            <person name="Oesterhelt D."/>
        </authorList>
    </citation>
    <scope>NUCLEOTIDE SEQUENCE [LARGE SCALE GENOMIC DNA]</scope>
    <source>
        <strain>ATCC 35678 / DSM 2160 / CIP 103997 / JCM 8858 / NBRC 14720 / NCIMB 2260 / Gabara</strain>
    </source>
</reference>